<gene>
    <name type="ordered locus">slr1919</name>
</gene>
<organism>
    <name type="scientific">Synechocystis sp. (strain ATCC 27184 / PCC 6803 / Kazusa)</name>
    <dbReference type="NCBI Taxonomy" id="1111708"/>
    <lineage>
        <taxon>Bacteria</taxon>
        <taxon>Bacillati</taxon>
        <taxon>Cyanobacteriota</taxon>
        <taxon>Cyanophyceae</taxon>
        <taxon>Synechococcales</taxon>
        <taxon>Merismopediaceae</taxon>
        <taxon>Synechocystis</taxon>
    </lineage>
</organism>
<reference key="1">
    <citation type="journal article" date="1996" name="DNA Res.">
        <title>Sequence analysis of the genome of the unicellular cyanobacterium Synechocystis sp. strain PCC6803. II. Sequence determination of the entire genome and assignment of potential protein-coding regions.</title>
        <authorList>
            <person name="Kaneko T."/>
            <person name="Sato S."/>
            <person name="Kotani H."/>
            <person name="Tanaka A."/>
            <person name="Asamizu E."/>
            <person name="Nakamura Y."/>
            <person name="Miyajima N."/>
            <person name="Hirosawa M."/>
            <person name="Sugiura M."/>
            <person name="Sasamoto S."/>
            <person name="Kimura T."/>
            <person name="Hosouchi T."/>
            <person name="Matsuno A."/>
            <person name="Muraki A."/>
            <person name="Nakazaki N."/>
            <person name="Naruo K."/>
            <person name="Okumura S."/>
            <person name="Shimpo S."/>
            <person name="Takeuchi C."/>
            <person name="Wada T."/>
            <person name="Watanabe A."/>
            <person name="Yamada M."/>
            <person name="Yasuda M."/>
            <person name="Tabata S."/>
        </authorList>
    </citation>
    <scope>NUCLEOTIDE SEQUENCE [LARGE SCALE GENOMIC DNA]</scope>
    <source>
        <strain>ATCC 27184 / PCC 6803 / Kazusa</strain>
    </source>
</reference>
<proteinExistence type="inferred from homology"/>
<keyword id="KW-1185">Reference proteome</keyword>
<dbReference type="EMBL" id="BA000022">
    <property type="protein sequence ID" value="BAA17147.1"/>
    <property type="molecule type" value="Genomic_DNA"/>
</dbReference>
<dbReference type="PIR" id="S75233">
    <property type="entry name" value="S75233"/>
</dbReference>
<dbReference type="SMR" id="P73121"/>
<dbReference type="IntAct" id="P73121">
    <property type="interactions" value="2"/>
</dbReference>
<dbReference type="STRING" id="1148.gene:10498008"/>
<dbReference type="PaxDb" id="1148-1652223"/>
<dbReference type="EnsemblBacteria" id="BAA17147">
    <property type="protein sequence ID" value="BAA17147"/>
    <property type="gene ID" value="BAA17147"/>
</dbReference>
<dbReference type="KEGG" id="syn:slr1919"/>
<dbReference type="eggNOG" id="COG0661">
    <property type="taxonomic scope" value="Bacteria"/>
</dbReference>
<dbReference type="InParanoid" id="P73121"/>
<dbReference type="PhylomeDB" id="P73121"/>
<dbReference type="Proteomes" id="UP000001425">
    <property type="component" value="Chromosome"/>
</dbReference>
<dbReference type="GO" id="GO:0005524">
    <property type="term" value="F:ATP binding"/>
    <property type="evidence" value="ECO:0007669"/>
    <property type="project" value="InterPro"/>
</dbReference>
<dbReference type="GO" id="GO:0004672">
    <property type="term" value="F:protein kinase activity"/>
    <property type="evidence" value="ECO:0007669"/>
    <property type="project" value="InterPro"/>
</dbReference>
<dbReference type="CDD" id="cd05121">
    <property type="entry name" value="ABC1_ADCK3-like"/>
    <property type="match status" value="1"/>
</dbReference>
<dbReference type="Gene3D" id="1.10.510.10">
    <property type="entry name" value="Transferase(Phosphotransferase) domain 1"/>
    <property type="match status" value="1"/>
</dbReference>
<dbReference type="InterPro" id="IPR004147">
    <property type="entry name" value="ABC1_dom"/>
</dbReference>
<dbReference type="InterPro" id="IPR011009">
    <property type="entry name" value="Kinase-like_dom_sf"/>
</dbReference>
<dbReference type="InterPro" id="IPR000719">
    <property type="entry name" value="Prot_kinase_dom"/>
</dbReference>
<dbReference type="InterPro" id="IPR050154">
    <property type="entry name" value="UbiB_kinase"/>
</dbReference>
<dbReference type="PANTHER" id="PTHR10566">
    <property type="entry name" value="CHAPERONE-ACTIVITY OF BC1 COMPLEX CABC1 -RELATED"/>
    <property type="match status" value="1"/>
</dbReference>
<dbReference type="PANTHER" id="PTHR10566:SF128">
    <property type="entry name" value="UBIB DOMAIN CONTAINING KINASE"/>
    <property type="match status" value="1"/>
</dbReference>
<dbReference type="Pfam" id="PF03109">
    <property type="entry name" value="ABC1"/>
    <property type="match status" value="1"/>
</dbReference>
<dbReference type="SUPFAM" id="SSF56112">
    <property type="entry name" value="Protein kinase-like (PK-like)"/>
    <property type="match status" value="1"/>
</dbReference>
<protein>
    <recommendedName>
        <fullName>Uncharacterized protein slr1919</fullName>
    </recommendedName>
</protein>
<comment type="similarity">
    <text evidence="1">Belongs to the protein kinase superfamily. ADCK protein kinase family.</text>
</comment>
<name>Y1919_SYNY3</name>
<accession>P73121</accession>
<sequence length="566" mass="65079">MPNPKPLPPQSELDNIRRYNAQAIANYYRRRPWKVLWRALEVVWSFGFFLTCLLWDQWTGQVEYYKRQRAEDLRELLTKLGPTFIKVGQALSTRPDLVRRDFLEELIKLQDQLPPFDNDLAFQLMEEQLGMKVDEAYREISAHPVAAASLGQVYRAMLFSGEEVAVKVQRPNLRPRLSLDLYLMRLGAQKFGRFLPLNLGHDLTLIVDEFGIKLFEEIDYLNEGRNAEKFAENFHGDAEVKVPCIYWQYSNQKVLTLEWIQGFKLTDTDKIRAAGLDPSDIIRIGVTSGLRQLLEHGFFHADPHPGNLFATLDGRMAYIDFGMMDQLEPGTKETIASSIVQLINKDYLALTEDFIALGFLAPNTDITPIIPALENVFGSAIGQSVQDFNFKTITDDFSELMYDYPFRVPAKFALIIRSLVTQEGLALSLDPNFKIVEVAYPYVARRLLTGESPQLRRQLIDVLFKNGKFQWQRLENMLSIARSDTKFDLLPTAQLGLQFLFSEEGLYLRRQILLALTEDDRLHTDEVQRIWGLVKDDFKPQELVNVAWNAVREFSLAGVSTILPQR</sequence>
<evidence type="ECO:0000305" key="1"/>
<feature type="chain" id="PRO_0000200734" description="Uncharacterized protein slr1919">
    <location>
        <begin position="1"/>
        <end position="566"/>
    </location>
</feature>